<protein>
    <recommendedName>
        <fullName evidence="1">Glycine cleavage system H protein</fullName>
    </recommendedName>
</protein>
<proteinExistence type="inferred from homology"/>
<dbReference type="EMBL" id="CP000828">
    <property type="protein sequence ID" value="ABW26556.1"/>
    <property type="molecule type" value="Genomic_DNA"/>
</dbReference>
<dbReference type="RefSeq" id="WP_012162080.1">
    <property type="nucleotide sequence ID" value="NC_009925.1"/>
</dbReference>
<dbReference type="SMR" id="B0C921"/>
<dbReference type="STRING" id="329726.AM1_1531"/>
<dbReference type="KEGG" id="amr:AM1_1531"/>
<dbReference type="eggNOG" id="COG0509">
    <property type="taxonomic scope" value="Bacteria"/>
</dbReference>
<dbReference type="HOGENOM" id="CLU_097408_2_2_3"/>
<dbReference type="OrthoDB" id="9796712at2"/>
<dbReference type="Proteomes" id="UP000000268">
    <property type="component" value="Chromosome"/>
</dbReference>
<dbReference type="GO" id="GO:0005829">
    <property type="term" value="C:cytosol"/>
    <property type="evidence" value="ECO:0007669"/>
    <property type="project" value="TreeGrafter"/>
</dbReference>
<dbReference type="GO" id="GO:0005960">
    <property type="term" value="C:glycine cleavage complex"/>
    <property type="evidence" value="ECO:0007669"/>
    <property type="project" value="InterPro"/>
</dbReference>
<dbReference type="GO" id="GO:0019464">
    <property type="term" value="P:glycine decarboxylation via glycine cleavage system"/>
    <property type="evidence" value="ECO:0007669"/>
    <property type="project" value="UniProtKB-UniRule"/>
</dbReference>
<dbReference type="CDD" id="cd06848">
    <property type="entry name" value="GCS_H"/>
    <property type="match status" value="1"/>
</dbReference>
<dbReference type="Gene3D" id="2.40.50.100">
    <property type="match status" value="1"/>
</dbReference>
<dbReference type="HAMAP" id="MF_00272">
    <property type="entry name" value="GcvH"/>
    <property type="match status" value="1"/>
</dbReference>
<dbReference type="InterPro" id="IPR003016">
    <property type="entry name" value="2-oxoA_DH_lipoyl-BS"/>
</dbReference>
<dbReference type="InterPro" id="IPR000089">
    <property type="entry name" value="Biotin_lipoyl"/>
</dbReference>
<dbReference type="InterPro" id="IPR002930">
    <property type="entry name" value="GCV_H"/>
</dbReference>
<dbReference type="InterPro" id="IPR033753">
    <property type="entry name" value="GCV_H/Fam206"/>
</dbReference>
<dbReference type="InterPro" id="IPR017453">
    <property type="entry name" value="GCV_H_sub"/>
</dbReference>
<dbReference type="InterPro" id="IPR011053">
    <property type="entry name" value="Single_hybrid_motif"/>
</dbReference>
<dbReference type="NCBIfam" id="TIGR00527">
    <property type="entry name" value="gcvH"/>
    <property type="match status" value="1"/>
</dbReference>
<dbReference type="NCBIfam" id="NF002270">
    <property type="entry name" value="PRK01202.1"/>
    <property type="match status" value="1"/>
</dbReference>
<dbReference type="PANTHER" id="PTHR11715">
    <property type="entry name" value="GLYCINE CLEAVAGE SYSTEM H PROTEIN"/>
    <property type="match status" value="1"/>
</dbReference>
<dbReference type="PANTHER" id="PTHR11715:SF3">
    <property type="entry name" value="GLYCINE CLEAVAGE SYSTEM H PROTEIN-RELATED"/>
    <property type="match status" value="1"/>
</dbReference>
<dbReference type="Pfam" id="PF01597">
    <property type="entry name" value="GCV_H"/>
    <property type="match status" value="1"/>
</dbReference>
<dbReference type="SUPFAM" id="SSF51230">
    <property type="entry name" value="Single hybrid motif"/>
    <property type="match status" value="1"/>
</dbReference>
<dbReference type="PROSITE" id="PS50968">
    <property type="entry name" value="BIOTINYL_LIPOYL"/>
    <property type="match status" value="1"/>
</dbReference>
<dbReference type="PROSITE" id="PS00189">
    <property type="entry name" value="LIPOYL"/>
    <property type="match status" value="1"/>
</dbReference>
<name>GCSH_ACAM1</name>
<accession>B0C921</accession>
<comment type="function">
    <text evidence="1">The glycine cleavage system catalyzes the degradation of glycine. The H protein shuttles the methylamine group of glycine from the P protein to the T protein.</text>
</comment>
<comment type="cofactor">
    <cofactor evidence="1">
        <name>(R)-lipoate</name>
        <dbReference type="ChEBI" id="CHEBI:83088"/>
    </cofactor>
    <text evidence="1">Binds 1 lipoyl cofactor covalently.</text>
</comment>
<comment type="subunit">
    <text evidence="1">The glycine cleavage system is composed of four proteins: P, T, L and H.</text>
</comment>
<comment type="similarity">
    <text evidence="1">Belongs to the GcvH family.</text>
</comment>
<feature type="chain" id="PRO_1000078722" description="Glycine cleavage system H protein">
    <location>
        <begin position="1"/>
        <end position="128"/>
    </location>
</feature>
<feature type="domain" description="Lipoyl-binding" evidence="2">
    <location>
        <begin position="24"/>
        <end position="106"/>
    </location>
</feature>
<feature type="modified residue" description="N6-lipoyllysine" evidence="1">
    <location>
        <position position="65"/>
    </location>
</feature>
<organism>
    <name type="scientific">Acaryochloris marina (strain MBIC 11017)</name>
    <dbReference type="NCBI Taxonomy" id="329726"/>
    <lineage>
        <taxon>Bacteria</taxon>
        <taxon>Bacillati</taxon>
        <taxon>Cyanobacteriota</taxon>
        <taxon>Cyanophyceae</taxon>
        <taxon>Acaryochloridales</taxon>
        <taxon>Acaryochloridaceae</taxon>
        <taxon>Acaryochloris</taxon>
    </lineage>
</organism>
<evidence type="ECO:0000255" key="1">
    <source>
        <dbReference type="HAMAP-Rule" id="MF_00272"/>
    </source>
</evidence>
<evidence type="ECO:0000255" key="2">
    <source>
        <dbReference type="PROSITE-ProRule" id="PRU01066"/>
    </source>
</evidence>
<keyword id="KW-0450">Lipoyl</keyword>
<keyword id="KW-1185">Reference proteome</keyword>
<sequence length="128" mass="13861">MSFEYPDNLKYMDSHEYVRLEGDVATVGITAFAIDQLGDIVFIELPEVGDELSQGETMGNIESVKAVEDIYAPINGTVLECNTAIADAPEQLAEDPYNNGWLLKIKVSGPAALDKAMSASDYQAKVEG</sequence>
<gene>
    <name evidence="1" type="primary">gcvH</name>
    <name type="ordered locus">AM1_1531</name>
</gene>
<reference key="1">
    <citation type="journal article" date="2008" name="Proc. Natl. Acad. Sci. U.S.A.">
        <title>Niche adaptation and genome expansion in the chlorophyll d-producing cyanobacterium Acaryochloris marina.</title>
        <authorList>
            <person name="Swingley W.D."/>
            <person name="Chen M."/>
            <person name="Cheung P.C."/>
            <person name="Conrad A.L."/>
            <person name="Dejesa L.C."/>
            <person name="Hao J."/>
            <person name="Honchak B.M."/>
            <person name="Karbach L.E."/>
            <person name="Kurdoglu A."/>
            <person name="Lahiri S."/>
            <person name="Mastrian S.D."/>
            <person name="Miyashita H."/>
            <person name="Page L."/>
            <person name="Ramakrishna P."/>
            <person name="Satoh S."/>
            <person name="Sattley W.M."/>
            <person name="Shimada Y."/>
            <person name="Taylor H.L."/>
            <person name="Tomo T."/>
            <person name="Tsuchiya T."/>
            <person name="Wang Z.T."/>
            <person name="Raymond J."/>
            <person name="Mimuro M."/>
            <person name="Blankenship R.E."/>
            <person name="Touchman J.W."/>
        </authorList>
    </citation>
    <scope>NUCLEOTIDE SEQUENCE [LARGE SCALE GENOMIC DNA]</scope>
    <source>
        <strain>MBIC 11017</strain>
    </source>
</reference>